<accession>F4JRR5</accession>
<accession>Q8L3Y4</accession>
<accession>Q9SW36</accession>
<evidence type="ECO:0000255" key="1"/>
<evidence type="ECO:0000255" key="2">
    <source>
        <dbReference type="PROSITE-ProRule" id="PRU00768"/>
    </source>
</evidence>
<evidence type="ECO:0000256" key="3">
    <source>
        <dbReference type="SAM" id="MobiDB-lite"/>
    </source>
</evidence>
<evidence type="ECO:0000269" key="4">
    <source>
    </source>
</evidence>
<evidence type="ECO:0000303" key="5">
    <source>
    </source>
</evidence>
<evidence type="ECO:0000303" key="6">
    <source>
    </source>
</evidence>
<evidence type="ECO:0000305" key="7"/>
<evidence type="ECO:0000305" key="8">
    <source>
    </source>
</evidence>
<evidence type="ECO:0000312" key="9">
    <source>
        <dbReference type="Araport" id="AT4G24900"/>
    </source>
</evidence>
<evidence type="ECO:0000312" key="10">
    <source>
        <dbReference type="EMBL" id="CAB36732.1"/>
    </source>
</evidence>
<name>TTL_ARATH</name>
<organism>
    <name type="scientific">Arabidopsis thaliana</name>
    <name type="common">Mouse-ear cress</name>
    <dbReference type="NCBI Taxonomy" id="3702"/>
    <lineage>
        <taxon>Eukaryota</taxon>
        <taxon>Viridiplantae</taxon>
        <taxon>Streptophyta</taxon>
        <taxon>Embryophyta</taxon>
        <taxon>Tracheophyta</taxon>
        <taxon>Spermatophyta</taxon>
        <taxon>Magnoliopsida</taxon>
        <taxon>eudicotyledons</taxon>
        <taxon>Gunneridae</taxon>
        <taxon>Pentapetalae</taxon>
        <taxon>rosids</taxon>
        <taxon>malvids</taxon>
        <taxon>Brassicales</taxon>
        <taxon>Brassicaceae</taxon>
        <taxon>Camelineae</taxon>
        <taxon>Arabidopsis</taxon>
    </lineage>
</organism>
<dbReference type="EMBL" id="AL035523">
    <property type="protein sequence ID" value="CAB36732.1"/>
    <property type="status" value="ALT_SEQ"/>
    <property type="molecule type" value="Genomic_DNA"/>
</dbReference>
<dbReference type="EMBL" id="AL161562">
    <property type="protein sequence ID" value="CAB79399.1"/>
    <property type="status" value="ALT_SEQ"/>
    <property type="molecule type" value="Genomic_DNA"/>
</dbReference>
<dbReference type="EMBL" id="CP002687">
    <property type="protein sequence ID" value="AEE84974.1"/>
    <property type="molecule type" value="Genomic_DNA"/>
</dbReference>
<dbReference type="EMBL" id="AY099687">
    <property type="protein sequence ID" value="AAM20538.1"/>
    <property type="molecule type" value="mRNA"/>
</dbReference>
<dbReference type="EMBL" id="AY128869">
    <property type="protein sequence ID" value="AAM91269.1"/>
    <property type="molecule type" value="mRNA"/>
</dbReference>
<dbReference type="PIR" id="T05511">
    <property type="entry name" value="T05511"/>
</dbReference>
<dbReference type="RefSeq" id="NP_194220.2">
    <molecule id="F4JRR5-1"/>
    <property type="nucleotide sequence ID" value="NM_118622.6"/>
</dbReference>
<dbReference type="SMR" id="F4JRR5"/>
<dbReference type="BioGRID" id="13880">
    <property type="interactions" value="5"/>
</dbReference>
<dbReference type="FunCoup" id="F4JRR5">
    <property type="interactions" value="2101"/>
</dbReference>
<dbReference type="IntAct" id="F4JRR5">
    <property type="interactions" value="5"/>
</dbReference>
<dbReference type="STRING" id="3702.F4JRR5"/>
<dbReference type="iPTMnet" id="F4JRR5"/>
<dbReference type="PaxDb" id="3702-AT4G24900.1"/>
<dbReference type="ProteomicsDB" id="234654">
    <molecule id="F4JRR5-1"/>
</dbReference>
<dbReference type="EnsemblPlants" id="AT4G24900.1">
    <molecule id="F4JRR5-1"/>
    <property type="protein sequence ID" value="AT4G24900.1"/>
    <property type="gene ID" value="AT4G24900"/>
</dbReference>
<dbReference type="GeneID" id="828592"/>
<dbReference type="Gramene" id="AT4G24900.1">
    <molecule id="F4JRR5-1"/>
    <property type="protein sequence ID" value="AT4G24900.1"/>
    <property type="gene ID" value="AT4G24900"/>
</dbReference>
<dbReference type="KEGG" id="ath:AT4G24900"/>
<dbReference type="Araport" id="AT4G24900"/>
<dbReference type="TAIR" id="AT4G24900">
    <property type="gene designation" value="TTL"/>
</dbReference>
<dbReference type="eggNOG" id="ENOG502QS8B">
    <property type="taxonomic scope" value="Eukaryota"/>
</dbReference>
<dbReference type="HOGENOM" id="CLU_041370_0_0_1"/>
<dbReference type="InParanoid" id="F4JRR5"/>
<dbReference type="PRO" id="PR:F4JRR5"/>
<dbReference type="Proteomes" id="UP000006548">
    <property type="component" value="Chromosome 4"/>
</dbReference>
<dbReference type="ExpressionAtlas" id="F4JRR5">
    <property type="expression patterns" value="baseline and differential"/>
</dbReference>
<dbReference type="GO" id="GO:0005634">
    <property type="term" value="C:nucleus"/>
    <property type="evidence" value="ECO:0000314"/>
    <property type="project" value="TAIR"/>
</dbReference>
<dbReference type="GO" id="GO:0008270">
    <property type="term" value="F:zinc ion binding"/>
    <property type="evidence" value="ECO:0007669"/>
    <property type="project" value="UniProtKB-KW"/>
</dbReference>
<dbReference type="GO" id="GO:0009742">
    <property type="term" value="P:brassinosteroid mediated signaling pathway"/>
    <property type="evidence" value="ECO:0007669"/>
    <property type="project" value="UniProtKB-KW"/>
</dbReference>
<dbReference type="GO" id="GO:0009793">
    <property type="term" value="P:embryo development ending in seed dormancy"/>
    <property type="evidence" value="ECO:0000315"/>
    <property type="project" value="TAIR"/>
</dbReference>
<dbReference type="GO" id="GO:0009960">
    <property type="term" value="P:endosperm development"/>
    <property type="evidence" value="ECO:0000315"/>
    <property type="project" value="TAIR"/>
</dbReference>
<dbReference type="InterPro" id="IPR028015">
    <property type="entry name" value="CCDC84-like"/>
</dbReference>
<dbReference type="PANTHER" id="PTHR31198:SF1">
    <property type="entry name" value="CENTROSOMAL AT-AC SPLICING FACTOR"/>
    <property type="match status" value="1"/>
</dbReference>
<dbReference type="PANTHER" id="PTHR31198">
    <property type="entry name" value="COILED-COIL DOMAIN-CONTAINING PROTEIN 84"/>
    <property type="match status" value="1"/>
</dbReference>
<dbReference type="Pfam" id="PF14968">
    <property type="entry name" value="CCDC84"/>
    <property type="match status" value="1"/>
</dbReference>
<protein>
    <recommendedName>
        <fullName evidence="6">TITAN-like protein</fullName>
    </recommendedName>
</protein>
<feature type="chain" id="PRO_0000423620" description="TITAN-like protein">
    <location>
        <begin position="1"/>
        <end position="421"/>
    </location>
</feature>
<feature type="zinc finger region" description="C2H2-type 1; degenerate" evidence="1">
    <location>
        <begin position="11"/>
        <end position="32"/>
    </location>
</feature>
<feature type="zinc finger region" description="C2H2-type 2; degenerate" evidence="1">
    <location>
        <begin position="70"/>
        <end position="100"/>
    </location>
</feature>
<feature type="region of interest" description="Disordered" evidence="3">
    <location>
        <begin position="279"/>
        <end position="306"/>
    </location>
</feature>
<feature type="region of interest" description="Disordered" evidence="3">
    <location>
        <begin position="376"/>
        <end position="421"/>
    </location>
</feature>
<feature type="short sequence motif" description="Nuclear localization signal 1" evidence="2">
    <location>
        <begin position="328"/>
        <end position="335"/>
    </location>
</feature>
<feature type="short sequence motif" description="Nuclear localization signal 2" evidence="2">
    <location>
        <begin position="377"/>
        <end position="384"/>
    </location>
</feature>
<feature type="compositionally biased region" description="Basic and acidic residues" evidence="3">
    <location>
        <begin position="377"/>
        <end position="389"/>
    </location>
</feature>
<feature type="splice variant" id="VSP_053215" description="In isoform 2." evidence="5">
    <location>
        <begin position="1"/>
        <end position="215"/>
    </location>
</feature>
<feature type="splice variant" id="VSP_053216" description="In isoform 2." evidence="5">
    <location>
        <begin position="254"/>
        <end position="256"/>
    </location>
</feature>
<reference key="1">
    <citation type="journal article" date="1999" name="Nature">
        <title>Sequence and analysis of chromosome 4 of the plant Arabidopsis thaliana.</title>
        <authorList>
            <person name="Mayer K.F.X."/>
            <person name="Schueller C."/>
            <person name="Wambutt R."/>
            <person name="Murphy G."/>
            <person name="Volckaert G."/>
            <person name="Pohl T."/>
            <person name="Duesterhoeft A."/>
            <person name="Stiekema W."/>
            <person name="Entian K.-D."/>
            <person name="Terryn N."/>
            <person name="Harris B."/>
            <person name="Ansorge W."/>
            <person name="Brandt P."/>
            <person name="Grivell L.A."/>
            <person name="Rieger M."/>
            <person name="Weichselgartner M."/>
            <person name="de Simone V."/>
            <person name="Obermaier B."/>
            <person name="Mache R."/>
            <person name="Mueller M."/>
            <person name="Kreis M."/>
            <person name="Delseny M."/>
            <person name="Puigdomenech P."/>
            <person name="Watson M."/>
            <person name="Schmidtheini T."/>
            <person name="Reichert B."/>
            <person name="Portetelle D."/>
            <person name="Perez-Alonso M."/>
            <person name="Boutry M."/>
            <person name="Bancroft I."/>
            <person name="Vos P."/>
            <person name="Hoheisel J."/>
            <person name="Zimmermann W."/>
            <person name="Wedler H."/>
            <person name="Ridley P."/>
            <person name="Langham S.-A."/>
            <person name="McCullagh B."/>
            <person name="Bilham L."/>
            <person name="Robben J."/>
            <person name="van der Schueren J."/>
            <person name="Grymonprez B."/>
            <person name="Chuang Y.-J."/>
            <person name="Vandenbussche F."/>
            <person name="Braeken M."/>
            <person name="Weltjens I."/>
            <person name="Voet M."/>
            <person name="Bastiaens I."/>
            <person name="Aert R."/>
            <person name="Defoor E."/>
            <person name="Weitzenegger T."/>
            <person name="Bothe G."/>
            <person name="Ramsperger U."/>
            <person name="Hilbert H."/>
            <person name="Braun M."/>
            <person name="Holzer E."/>
            <person name="Brandt A."/>
            <person name="Peters S."/>
            <person name="van Staveren M."/>
            <person name="Dirkse W."/>
            <person name="Mooijman P."/>
            <person name="Klein Lankhorst R."/>
            <person name="Rose M."/>
            <person name="Hauf J."/>
            <person name="Koetter P."/>
            <person name="Berneiser S."/>
            <person name="Hempel S."/>
            <person name="Feldpausch M."/>
            <person name="Lamberth S."/>
            <person name="Van den Daele H."/>
            <person name="De Keyser A."/>
            <person name="Buysshaert C."/>
            <person name="Gielen J."/>
            <person name="Villarroel R."/>
            <person name="De Clercq R."/>
            <person name="van Montagu M."/>
            <person name="Rogers J."/>
            <person name="Cronin A."/>
            <person name="Quail M.A."/>
            <person name="Bray-Allen S."/>
            <person name="Clark L."/>
            <person name="Doggett J."/>
            <person name="Hall S."/>
            <person name="Kay M."/>
            <person name="Lennard N."/>
            <person name="McLay K."/>
            <person name="Mayes R."/>
            <person name="Pettett A."/>
            <person name="Rajandream M.A."/>
            <person name="Lyne M."/>
            <person name="Benes V."/>
            <person name="Rechmann S."/>
            <person name="Borkova D."/>
            <person name="Bloecker H."/>
            <person name="Scharfe M."/>
            <person name="Grimm M."/>
            <person name="Loehnert T.-H."/>
            <person name="Dose S."/>
            <person name="de Haan M."/>
            <person name="Maarse A.C."/>
            <person name="Schaefer M."/>
            <person name="Mueller-Auer S."/>
            <person name="Gabel C."/>
            <person name="Fuchs M."/>
            <person name="Fartmann B."/>
            <person name="Granderath K."/>
            <person name="Dauner D."/>
            <person name="Herzl A."/>
            <person name="Neumann S."/>
            <person name="Argiriou A."/>
            <person name="Vitale D."/>
            <person name="Liguori R."/>
            <person name="Piravandi E."/>
            <person name="Massenet O."/>
            <person name="Quigley F."/>
            <person name="Clabauld G."/>
            <person name="Muendlein A."/>
            <person name="Felber R."/>
            <person name="Schnabl S."/>
            <person name="Hiller R."/>
            <person name="Schmidt W."/>
            <person name="Lecharny A."/>
            <person name="Aubourg S."/>
            <person name="Chefdor F."/>
            <person name="Cooke R."/>
            <person name="Berger C."/>
            <person name="Monfort A."/>
            <person name="Casacuberta E."/>
            <person name="Gibbons T."/>
            <person name="Weber N."/>
            <person name="Vandenbol M."/>
            <person name="Bargues M."/>
            <person name="Terol J."/>
            <person name="Torres A."/>
            <person name="Perez-Perez A."/>
            <person name="Purnelle B."/>
            <person name="Bent E."/>
            <person name="Johnson S."/>
            <person name="Tacon D."/>
            <person name="Jesse T."/>
            <person name="Heijnen L."/>
            <person name="Schwarz S."/>
            <person name="Scholler P."/>
            <person name="Heber S."/>
            <person name="Francs P."/>
            <person name="Bielke C."/>
            <person name="Frishman D."/>
            <person name="Haase D."/>
            <person name="Lemcke K."/>
            <person name="Mewes H.-W."/>
            <person name="Stocker S."/>
            <person name="Zaccaria P."/>
            <person name="Bevan M."/>
            <person name="Wilson R.K."/>
            <person name="de la Bastide M."/>
            <person name="Habermann K."/>
            <person name="Parnell L."/>
            <person name="Dedhia N."/>
            <person name="Gnoj L."/>
            <person name="Schutz K."/>
            <person name="Huang E."/>
            <person name="Spiegel L."/>
            <person name="Sekhon M."/>
            <person name="Murray J."/>
            <person name="Sheet P."/>
            <person name="Cordes M."/>
            <person name="Abu-Threideh J."/>
            <person name="Stoneking T."/>
            <person name="Kalicki J."/>
            <person name="Graves T."/>
            <person name="Harmon G."/>
            <person name="Edwards J."/>
            <person name="Latreille P."/>
            <person name="Courtney L."/>
            <person name="Cloud J."/>
            <person name="Abbott A."/>
            <person name="Scott K."/>
            <person name="Johnson D."/>
            <person name="Minx P."/>
            <person name="Bentley D."/>
            <person name="Fulton B."/>
            <person name="Miller N."/>
            <person name="Greco T."/>
            <person name="Kemp K."/>
            <person name="Kramer J."/>
            <person name="Fulton L."/>
            <person name="Mardis E."/>
            <person name="Dante M."/>
            <person name="Pepin K."/>
            <person name="Hillier L.W."/>
            <person name="Nelson J."/>
            <person name="Spieth J."/>
            <person name="Ryan E."/>
            <person name="Andrews S."/>
            <person name="Geisel C."/>
            <person name="Layman D."/>
            <person name="Du H."/>
            <person name="Ali J."/>
            <person name="Berghoff A."/>
            <person name="Jones K."/>
            <person name="Drone K."/>
            <person name="Cotton M."/>
            <person name="Joshu C."/>
            <person name="Antonoiu B."/>
            <person name="Zidanic M."/>
            <person name="Strong C."/>
            <person name="Sun H."/>
            <person name="Lamar B."/>
            <person name="Yordan C."/>
            <person name="Ma P."/>
            <person name="Zhong J."/>
            <person name="Preston R."/>
            <person name="Vil D."/>
            <person name="Shekher M."/>
            <person name="Matero A."/>
            <person name="Shah R."/>
            <person name="Swaby I.K."/>
            <person name="O'Shaughnessy A."/>
            <person name="Rodriguez M."/>
            <person name="Hoffman J."/>
            <person name="Till S."/>
            <person name="Granat S."/>
            <person name="Shohdy N."/>
            <person name="Hasegawa A."/>
            <person name="Hameed A."/>
            <person name="Lodhi M."/>
            <person name="Johnson A."/>
            <person name="Chen E."/>
            <person name="Marra M.A."/>
            <person name="Martienssen R."/>
            <person name="McCombie W.R."/>
        </authorList>
    </citation>
    <scope>NUCLEOTIDE SEQUENCE [LARGE SCALE GENOMIC DNA]</scope>
    <source>
        <strain>cv. Columbia</strain>
    </source>
</reference>
<reference key="2">
    <citation type="journal article" date="2017" name="Plant J.">
        <title>Araport11: a complete reannotation of the Arabidopsis thaliana reference genome.</title>
        <authorList>
            <person name="Cheng C.Y."/>
            <person name="Krishnakumar V."/>
            <person name="Chan A.P."/>
            <person name="Thibaud-Nissen F."/>
            <person name="Schobel S."/>
            <person name="Town C.D."/>
        </authorList>
    </citation>
    <scope>GENOME REANNOTATION</scope>
    <source>
        <strain>cv. Columbia</strain>
    </source>
</reference>
<reference key="3">
    <citation type="journal article" date="2003" name="Science">
        <title>Empirical analysis of transcriptional activity in the Arabidopsis genome.</title>
        <authorList>
            <person name="Yamada K."/>
            <person name="Lim J."/>
            <person name="Dale J.M."/>
            <person name="Chen H."/>
            <person name="Shinn P."/>
            <person name="Palm C.J."/>
            <person name="Southwick A.M."/>
            <person name="Wu H.C."/>
            <person name="Kim C.J."/>
            <person name="Nguyen M."/>
            <person name="Pham P.K."/>
            <person name="Cheuk R.F."/>
            <person name="Karlin-Newmann G."/>
            <person name="Liu S.X."/>
            <person name="Lam B."/>
            <person name="Sakano H."/>
            <person name="Wu T."/>
            <person name="Yu G."/>
            <person name="Miranda M."/>
            <person name="Quach H.L."/>
            <person name="Tripp M."/>
            <person name="Chang C.H."/>
            <person name="Lee J.M."/>
            <person name="Toriumi M.J."/>
            <person name="Chan M.M."/>
            <person name="Tang C.C."/>
            <person name="Onodera C.S."/>
            <person name="Deng J.M."/>
            <person name="Akiyama K."/>
            <person name="Ansari Y."/>
            <person name="Arakawa T."/>
            <person name="Banh J."/>
            <person name="Banno F."/>
            <person name="Bowser L."/>
            <person name="Brooks S.Y."/>
            <person name="Carninci P."/>
            <person name="Chao Q."/>
            <person name="Choy N."/>
            <person name="Enju A."/>
            <person name="Goldsmith A.D."/>
            <person name="Gurjal M."/>
            <person name="Hansen N.F."/>
            <person name="Hayashizaki Y."/>
            <person name="Johnson-Hopson C."/>
            <person name="Hsuan V.W."/>
            <person name="Iida K."/>
            <person name="Karnes M."/>
            <person name="Khan S."/>
            <person name="Koesema E."/>
            <person name="Ishida J."/>
            <person name="Jiang P.X."/>
            <person name="Jones T."/>
            <person name="Kawai J."/>
            <person name="Kamiya A."/>
            <person name="Meyers C."/>
            <person name="Nakajima M."/>
            <person name="Narusaka M."/>
            <person name="Seki M."/>
            <person name="Sakurai T."/>
            <person name="Satou M."/>
            <person name="Tamse R."/>
            <person name="Vaysberg M."/>
            <person name="Wallender E.K."/>
            <person name="Wong C."/>
            <person name="Yamamura Y."/>
            <person name="Yuan S."/>
            <person name="Shinozaki K."/>
            <person name="Davis R.W."/>
            <person name="Theologis A."/>
            <person name="Ecker J.R."/>
        </authorList>
    </citation>
    <scope>NUCLEOTIDE SEQUENCE [LARGE SCALE MRNA] (ISOFORM 2)</scope>
    <source>
        <strain>cv. Columbia</strain>
    </source>
</reference>
<reference key="4">
    <citation type="journal article" date="2012" name="J. Exp. Bot.">
        <title>An Arabidopsis gene encoding a C2H2-domain protein with alternatively spliced transcripts is essential for endosperm development.</title>
        <authorList>
            <person name="Lu X."/>
            <person name="Li Y."/>
            <person name="Su Y."/>
            <person name="Liang Q."/>
            <person name="Meng H."/>
            <person name="Li S."/>
            <person name="Shen S."/>
            <person name="Fan Y."/>
            <person name="Zhang C."/>
        </authorList>
    </citation>
    <scope>FUNCTION</scope>
    <scope>ALTERNATIVE SPLICING</scope>
    <scope>DISRUPTION PHENOTYPE</scope>
    <scope>ZINC-FINGER</scope>
    <scope>TISSUE SPECIFICITY</scope>
    <scope>SUBCELLULAR LOCATION</scope>
    <source>
        <strain>cv. Columbia</strain>
    </source>
</reference>
<proteinExistence type="evidence at transcript level"/>
<keyword id="KW-0025">Alternative splicing</keyword>
<keyword id="KW-1070">Brassinosteroid signaling pathway</keyword>
<keyword id="KW-0479">Metal-binding</keyword>
<keyword id="KW-0539">Nucleus</keyword>
<keyword id="KW-0597">Phosphoprotein</keyword>
<keyword id="KW-1185">Reference proteome</keyword>
<keyword id="KW-0677">Repeat</keyword>
<keyword id="KW-0346">Stress response</keyword>
<keyword id="KW-0862">Zinc</keyword>
<keyword id="KW-0863">Zinc-finger</keyword>
<gene>
    <name evidence="6" type="primary">TTL</name>
    <name evidence="9" type="ordered locus">At4g24900</name>
    <name evidence="10" type="ORF">F13M23.40</name>
</gene>
<comment type="function">
    <text evidence="4">Key regulator for endosperm and embryo nuclear divisions.</text>
</comment>
<comment type="subcellular location">
    <subcellularLocation>
        <location evidence="2 4">Nucleus</location>
    </subcellularLocation>
</comment>
<comment type="alternative products">
    <event type="alternative splicing"/>
    <isoform>
        <id>F4JRR5-1</id>
        <name>1</name>
        <sequence type="displayed"/>
    </isoform>
    <isoform>
        <id>F4JRR5-2</id>
        <name>2</name>
        <sequence type="described" ref="VSP_053215 VSP_053216"/>
    </isoform>
    <text>Additional isoforms seem to exist.</text>
</comment>
<comment type="tissue specificity">
    <text evidence="4">Also present in cotyledons, hypocotyls, stems, veins of sepals and stigmas, and actively dividing tissues such as shoot apical meristem, root tips and emerging true leaves (PubMed:22991160). Weak expression in petals and anthers, and not detected in mature leaves (PubMed:22991160). In seeds, expressed in both the endosperm and embryo (PubMed:22991160).</text>
</comment>
<comment type="domain">
    <text evidence="4">The C-terminus is essential for the function of the protein and it contains two conserved motifs (289-300) and (365-389) of unknown function present in orthologous proteins from various eukaryotes.</text>
</comment>
<comment type="disruption phenotype">
    <text evidence="4">Aborted seed development (PubMed:22991160). Embryos arrested at the globular to heart stage transition and defective endosperm development with multi-nucleolated endosperm cells (PubMed:22991160).</text>
</comment>
<comment type="miscellaneous">
    <text evidence="8">At least nine differentially spliced transcript isoforms are produced (Probable). Full-length isoforms, but not the truncated ones lacking the C-terminal domain, are able to rescue disruption mutants (Probable) (PubMed:22991160).</text>
</comment>
<comment type="sequence caution" evidence="7">
    <conflict type="erroneous gene model prediction">
        <sequence resource="EMBL-CDS" id="CAB36732"/>
    </conflict>
</comment>
<comment type="sequence caution" evidence="7">
    <conflict type="erroneous gene model prediction">
        <sequence resource="EMBL-CDS" id="CAB79399"/>
    </conflict>
</comment>
<sequence length="421" mass="47520">MKKPSKKSEIEFCTVCRFHHDQGSRHKYFPRHKSSLSSLLDRFRSKIADVRFFLKNPSVLRPQEQSQNRVWCVFCDEDIVELGSSFACSKAINHFASSDHLKNIKQFLSKNGPAMDCIDEFRISEADVAKWEKKCQSFGNEDASFEGSCGQLSGTSNDIHTKLAFETMDRIKKVPAHHINSYKSNDVMPLQYNTNEYQISLSEIPGVIHNGSYLNMDDSQFPLCDESGNGFGEHSIPCRSKDYSGNGNYCTQENYQVSQDKKQIDGSYNPPGVVGMTSISSSHSTDAGGNVHSGAPPPWLDANDGDFSSVQLNQSDVARFQAKVPGKNRKLNPNRVGAAWAERRKIEIEMEKSGHVTKSNIDPDWLPNFGRVWQSGTRKESRKEFEKEKRKLVKTESISTESEPVKIQPYISKRARRESGE</sequence>